<protein>
    <recommendedName>
        <fullName evidence="8">L-ornithine N(5)-monooxygenase</fullName>
        <shortName evidence="2">OMO</shortName>
        <ecNumber evidence="4">1.14.13.196</ecNumber>
    </recommendedName>
    <alternativeName>
        <fullName evidence="8">L-ornithine N(5)-oxygenase</fullName>
    </alternativeName>
    <alternativeName>
        <fullName evidence="8">Siderophore biosynthesis cluster protein 1</fullName>
    </alternativeName>
</protein>
<comment type="function">
    <text evidence="3 4">L-ornithine N(5)-monooxygenase; part of the gene cluster that mediates the biosynthesis of hydroxamate-containing siderophores that play a critical role in virulence via intracellular iron acquisition during macrophage infection (PubMed:18404210, PubMed:21341981). SID1 catalyzes the conversion of L-ornithine to N(5)-hydroxyornithine, the first step in the biosynthesis of all hydroxamate-containing siderophores (PubMed:18404210).</text>
</comment>
<comment type="catalytic activity">
    <reaction evidence="4">
        <text>L-ornithine + NADPH + O2 = N(5)-hydroxy-L-ornithine + NADP(+) + H2O</text>
        <dbReference type="Rhea" id="RHEA:41508"/>
        <dbReference type="ChEBI" id="CHEBI:15377"/>
        <dbReference type="ChEBI" id="CHEBI:15379"/>
        <dbReference type="ChEBI" id="CHEBI:46911"/>
        <dbReference type="ChEBI" id="CHEBI:57783"/>
        <dbReference type="ChEBI" id="CHEBI:58349"/>
        <dbReference type="ChEBI" id="CHEBI:78275"/>
        <dbReference type="EC" id="1.14.13.196"/>
    </reaction>
</comment>
<comment type="catalytic activity">
    <reaction evidence="4">
        <text>L-ornithine + NADH + O2 = N(5)-hydroxy-L-ornithine + NAD(+) + H2O</text>
        <dbReference type="Rhea" id="RHEA:41512"/>
        <dbReference type="ChEBI" id="CHEBI:15377"/>
        <dbReference type="ChEBI" id="CHEBI:15379"/>
        <dbReference type="ChEBI" id="CHEBI:46911"/>
        <dbReference type="ChEBI" id="CHEBI:57540"/>
        <dbReference type="ChEBI" id="CHEBI:57945"/>
        <dbReference type="ChEBI" id="CHEBI:78275"/>
        <dbReference type="EC" id="1.14.13.196"/>
    </reaction>
</comment>
<comment type="cofactor">
    <cofactor evidence="1">
        <name>FAD</name>
        <dbReference type="ChEBI" id="CHEBI:57692"/>
    </cofactor>
    <text evidence="1">Binds 1 FAD per subunit.</text>
</comment>
<comment type="pathway">
    <text evidence="4">Siderophore biosynthesis.</text>
</comment>
<comment type="subunit">
    <text evidence="1">Homotetramer.</text>
</comment>
<comment type="induction">
    <text evidence="3 4 6">Expression is induced during iron deprivation (PubMed:18404210). Also induced in response to reactive nitrogen species (PubMed:16030248). Expression is regulated by the transcription factor SRE1 (PubMed:22117028).</text>
</comment>
<comment type="disruption phenotype">
    <text evidence="4 5">Results in poor growth under low iron conditions and loss of siderophore production (PubMed:18404210, PubMed:21341981). Also leads to a significant growth defect in human and murine macrophages and attenuation in the mouse model of infection (PubMed:18404210, PubMed:21341981).</text>
</comment>
<comment type="similarity">
    <text evidence="9">Belongs to the lysine N(6)-hydroxylase/L-ornithine N(5)-oxygenase family.</text>
</comment>
<evidence type="ECO:0000250" key="1">
    <source>
        <dbReference type="UniProtKB" id="E9QYP0"/>
    </source>
</evidence>
<evidence type="ECO:0000250" key="2">
    <source>
        <dbReference type="UniProtKB" id="G5EB76"/>
    </source>
</evidence>
<evidence type="ECO:0000269" key="3">
    <source>
    </source>
</evidence>
<evidence type="ECO:0000269" key="4">
    <source>
    </source>
</evidence>
<evidence type="ECO:0000269" key="5">
    <source>
    </source>
</evidence>
<evidence type="ECO:0000269" key="6">
    <source>
    </source>
</evidence>
<evidence type="ECO:0000303" key="7">
    <source>
    </source>
</evidence>
<evidence type="ECO:0000303" key="8">
    <source>
    </source>
</evidence>
<evidence type="ECO:0000305" key="9"/>
<reference key="1">
    <citation type="journal article" date="2008" name="PLoS Pathog.">
        <title>Histoplasma requires SID1, a member of an iron-regulated siderophore gene cluster, for host colonization.</title>
        <authorList>
            <person name="Hwang L.H."/>
            <person name="Mayfield J.A."/>
            <person name="Rine J."/>
            <person name="Sil A."/>
        </authorList>
    </citation>
    <scope>NUCLEOTIDE SEQUENCE [GENOMIC DNA]</scope>
    <scope>FUNCTION</scope>
    <scope>DISRUPTION PHENOTYPE</scope>
    <scope>INDUCTION</scope>
    <source>
        <strain>ATCC 26032 / G217B</strain>
    </source>
</reference>
<reference key="2">
    <citation type="journal article" date="2005" name="Mol. Biol. Cell">
        <title>Identification of Histoplasma capsulatum transcripts induced in response to reactive nitrogen species.</title>
        <authorList>
            <person name="Nittler M.P."/>
            <person name="Hocking-Murray D."/>
            <person name="Foo C.K."/>
            <person name="Sil A."/>
        </authorList>
    </citation>
    <scope>INDUCTION</scope>
</reference>
<reference key="3">
    <citation type="journal article" date="2011" name="Med. Mycol.">
        <title>Histoplasma capsulatum utilizes siderophores for intracellular iron acquisition in macrophages.</title>
        <authorList>
            <person name="Hilty J."/>
            <person name="George Smulian A."/>
            <person name="Newman S.L."/>
        </authorList>
    </citation>
    <scope>FUNCTION</scope>
    <scope>DISRUPTION PHENOTYPE</scope>
</reference>
<reference key="4">
    <citation type="journal article" date="2012" name="Eukaryot. Cell">
        <title>SRE1 regulates iron-dependent and -independent pathways in the fungal pathogen Histoplasma capsulatum.</title>
        <authorList>
            <person name="Hwang L.H."/>
            <person name="Seth E."/>
            <person name="Gilmore S.A."/>
            <person name="Sil A."/>
        </authorList>
    </citation>
    <scope>INDUCTION</scope>
</reference>
<keyword id="KW-0274">FAD</keyword>
<keyword id="KW-0285">Flavoprotein</keyword>
<keyword id="KW-0503">Monooxygenase</keyword>
<keyword id="KW-0521">NADP</keyword>
<keyword id="KW-0560">Oxidoreductase</keyword>
<feature type="chain" id="PRO_0000444390" description="L-ornithine N(5)-monooxygenase">
    <location>
        <begin position="1"/>
        <end position="475"/>
    </location>
</feature>
<feature type="binding site" evidence="1">
    <location>
        <begin position="65"/>
        <end position="73"/>
    </location>
    <ligand>
        <name>FAD</name>
        <dbReference type="ChEBI" id="CHEBI:57692"/>
    </ligand>
</feature>
<feature type="binding site" evidence="1">
    <location>
        <position position="84"/>
    </location>
    <ligand>
        <name>FAD</name>
        <dbReference type="ChEBI" id="CHEBI:57692"/>
    </ligand>
</feature>
<feature type="binding site" evidence="1">
    <location>
        <position position="89"/>
    </location>
    <ligand>
        <name>substrate</name>
    </ligand>
</feature>
<feature type="binding site" evidence="1">
    <location>
        <position position="150"/>
    </location>
    <ligand>
        <name>FAD</name>
        <dbReference type="ChEBI" id="CHEBI:57692"/>
    </ligand>
</feature>
<feature type="binding site" evidence="1">
    <location>
        <begin position="238"/>
        <end position="241"/>
    </location>
    <ligand>
        <name>NADP(+)</name>
        <dbReference type="ChEBI" id="CHEBI:58349"/>
    </ligand>
</feature>
<feature type="binding site" evidence="1">
    <location>
        <begin position="277"/>
        <end position="280"/>
    </location>
    <ligand>
        <name>substrate</name>
    </ligand>
</feature>
<feature type="binding site" evidence="1">
    <location>
        <begin position="307"/>
        <end position="309"/>
    </location>
    <ligand>
        <name>NADP(+)</name>
        <dbReference type="ChEBI" id="CHEBI:58349"/>
    </ligand>
</feature>
<feature type="binding site" evidence="1">
    <location>
        <position position="307"/>
    </location>
    <ligand>
        <name>substrate</name>
    </ligand>
</feature>
<feature type="binding site" evidence="1">
    <location>
        <begin position="446"/>
        <end position="448"/>
    </location>
    <ligand>
        <name>FAD</name>
        <dbReference type="ChEBI" id="CHEBI:57692"/>
    </ligand>
</feature>
<feature type="binding site" evidence="1">
    <location>
        <position position="449"/>
    </location>
    <ligand>
        <name>substrate</name>
    </ligand>
</feature>
<accession>B2KWI1</accession>
<name>SIDA_AJECA</name>
<gene>
    <name evidence="8" type="primary">SID1</name>
    <name evidence="7" type="synonym">LOM1</name>
</gene>
<dbReference type="EC" id="1.14.13.196" evidence="4"/>
<dbReference type="EMBL" id="EU253976">
    <property type="protein sequence ID" value="ACC64454.1"/>
    <property type="molecule type" value="Genomic_DNA"/>
</dbReference>
<dbReference type="SMR" id="B2KWI1"/>
<dbReference type="GO" id="GO:0031172">
    <property type="term" value="F:ornithine N5-monooxygenase activity"/>
    <property type="evidence" value="ECO:0007669"/>
    <property type="project" value="RHEA"/>
</dbReference>
<dbReference type="GO" id="GO:0009058">
    <property type="term" value="P:biosynthetic process"/>
    <property type="evidence" value="ECO:0007669"/>
    <property type="project" value="UniProtKB-ARBA"/>
</dbReference>
<dbReference type="GO" id="GO:0006879">
    <property type="term" value="P:intracellular iron ion homeostasis"/>
    <property type="evidence" value="ECO:0007669"/>
    <property type="project" value="TreeGrafter"/>
</dbReference>
<dbReference type="Gene3D" id="3.50.50.60">
    <property type="entry name" value="FAD/NAD(P)-binding domain"/>
    <property type="match status" value="1"/>
</dbReference>
<dbReference type="InterPro" id="IPR036188">
    <property type="entry name" value="FAD/NAD-bd_sf"/>
</dbReference>
<dbReference type="InterPro" id="IPR025700">
    <property type="entry name" value="Lys/Orn_oxygenase"/>
</dbReference>
<dbReference type="PANTHER" id="PTHR42802:SF1">
    <property type="entry name" value="L-ORNITHINE N(5)-MONOOXYGENASE"/>
    <property type="match status" value="1"/>
</dbReference>
<dbReference type="PANTHER" id="PTHR42802">
    <property type="entry name" value="MONOOXYGENASE"/>
    <property type="match status" value="1"/>
</dbReference>
<dbReference type="Pfam" id="PF13434">
    <property type="entry name" value="Lys_Orn_oxgnase"/>
    <property type="match status" value="1"/>
</dbReference>
<dbReference type="PRINTS" id="PR00368">
    <property type="entry name" value="FADPNR"/>
</dbReference>
<dbReference type="SUPFAM" id="SSF51905">
    <property type="entry name" value="FAD/NAD(P)-binding domain"/>
    <property type="match status" value="1"/>
</dbReference>
<organism>
    <name type="scientific">Ajellomyces capsulatus</name>
    <name type="common">Darling's disease fungus</name>
    <name type="synonym">Histoplasma capsulatum</name>
    <dbReference type="NCBI Taxonomy" id="5037"/>
    <lineage>
        <taxon>Eukaryota</taxon>
        <taxon>Fungi</taxon>
        <taxon>Dikarya</taxon>
        <taxon>Ascomycota</taxon>
        <taxon>Pezizomycotina</taxon>
        <taxon>Eurotiomycetes</taxon>
        <taxon>Eurotiomycetidae</taxon>
        <taxon>Onygenales</taxon>
        <taxon>Ajellomycetaceae</taxon>
        <taxon>Histoplasma</taxon>
    </lineage>
</organism>
<sequence length="475" mass="53388">METVLKNDCSHCQESVILRENGGAGRSSNTGIQHDIICVGFGPAALAIAIAMRDRGIQRRVRFLERQPEFGWHTGMLLPGSKMQISFIKDLATIRNPRSHFTFLNYLHQKDRLVHFTNLSTHLPFREEFNDYMKWCASHFNDWVQYNQEVLSVTAVESTPGRPAEYFKLISRDVRSGELRELSANHIIVASGGEPAIPPILSTQHLPKTVIHSSTYLGSVHHLLQEKNGSYRFAVVGGGQSAVEISEDIQSRYANSKVTLVTKASALKPSDDSPFVNEIFDPSSVDKFYSLDHSARQQTLLENKATNYGVVRLPLLESVYEKLYRQKFLEPNPAKWPFRLVTGREVMGLKELPNNQIELQLKDTLSGRVESSAEVYDLVILATGYTRNPIATMLKPLEQIVEAPADGKTYCTDRDYRLRFRQGKVKRDAGIWLQGCCESSHGLSDSLLSILAVRSSELLDSILASSKRAEDHARL</sequence>
<proteinExistence type="evidence at transcript level"/>